<accession>Q4WY16</accession>
<organism>
    <name type="scientific">Aspergillus fumigatus (strain ATCC MYA-4609 / CBS 101355 / FGSC A1100 / Af293)</name>
    <name type="common">Neosartorya fumigata</name>
    <dbReference type="NCBI Taxonomy" id="330879"/>
    <lineage>
        <taxon>Eukaryota</taxon>
        <taxon>Fungi</taxon>
        <taxon>Dikarya</taxon>
        <taxon>Ascomycota</taxon>
        <taxon>Pezizomycotina</taxon>
        <taxon>Eurotiomycetes</taxon>
        <taxon>Eurotiomycetidae</taxon>
        <taxon>Eurotiales</taxon>
        <taxon>Aspergillaceae</taxon>
        <taxon>Aspergillus</taxon>
        <taxon>Aspergillus subgen. Fumigati</taxon>
    </lineage>
</organism>
<proteinExistence type="inferred from homology"/>
<feature type="transit peptide" description="Mitochondrion" evidence="1">
    <location>
        <begin position="1"/>
        <end position="52"/>
    </location>
</feature>
<feature type="chain" id="PRO_0000413245" description="Glutamyl-tRNA(Gln) amidotransferase subunit B, mitochondrial">
    <location>
        <begin position="53"/>
        <end position="601"/>
    </location>
</feature>
<sequence length="601" mass="66848">MLQQWLRQSPRAARVLRGSCCRGPQSGSLRHSPLPTAPHRCIRSLQTSATESKERIPLRKQLKQDAKALKAQKRQKRASEEASRTKWELTVGIEIHAQLNTETKLFSRASTSNTDTPNSNVALFDLAFPGSQPEFQATALLPALRAAIALNCDIQPVSRFDRKHYFYQDQPAGYQITQYYEPFAKNGYVDLFPHDGIAPEDGDHVRIGIKQIQLEQDTAKSQEYPPSTQLLDFNRVSHPLIEIITMPQIHNPATAAACVRKIQAVLQSCSAVTTGMELGGLRADVNVSIRRRDEAPGTHQYGGIGGLGQRTEIKNLSSFKAVEDAVIAEKNRQIAVLESGGVIEGETRGWTIGSTETRKLRGKEGEVDYRYMPDPDLPPLIIGHDLISNLRDSLPTPPDQLIEMLAGTEYGLSIEDAKPLIELDDGARLEYYQDVVDILRDLQQDKDAKSRGGLARMAGNWVLHELGGLCTKADLAWDAQRVPAETLAQIIDQLQRKRITGATAKQVLAMVFDGDRRPVPQLLEEENLLLRPLSRDEYLALAEAAIGQNPQMVEQIRAKNQLGKLGWFVGQMMRMGEKGRVEAQKADEILRELILGKSDQP</sequence>
<keyword id="KW-0067">ATP-binding</keyword>
<keyword id="KW-0436">Ligase</keyword>
<keyword id="KW-0496">Mitochondrion</keyword>
<keyword id="KW-0547">Nucleotide-binding</keyword>
<keyword id="KW-0648">Protein biosynthesis</keyword>
<keyword id="KW-1185">Reference proteome</keyword>
<keyword id="KW-0809">Transit peptide</keyword>
<reference key="1">
    <citation type="journal article" date="2005" name="Nature">
        <title>Genomic sequence of the pathogenic and allergenic filamentous fungus Aspergillus fumigatus.</title>
        <authorList>
            <person name="Nierman W.C."/>
            <person name="Pain A."/>
            <person name="Anderson M.J."/>
            <person name="Wortman J.R."/>
            <person name="Kim H.S."/>
            <person name="Arroyo J."/>
            <person name="Berriman M."/>
            <person name="Abe K."/>
            <person name="Archer D.B."/>
            <person name="Bermejo C."/>
            <person name="Bennett J.W."/>
            <person name="Bowyer P."/>
            <person name="Chen D."/>
            <person name="Collins M."/>
            <person name="Coulsen R."/>
            <person name="Davies R."/>
            <person name="Dyer P.S."/>
            <person name="Farman M.L."/>
            <person name="Fedorova N."/>
            <person name="Fedorova N.D."/>
            <person name="Feldblyum T.V."/>
            <person name="Fischer R."/>
            <person name="Fosker N."/>
            <person name="Fraser A."/>
            <person name="Garcia J.L."/>
            <person name="Garcia M.J."/>
            <person name="Goble A."/>
            <person name="Goldman G.H."/>
            <person name="Gomi K."/>
            <person name="Griffith-Jones S."/>
            <person name="Gwilliam R."/>
            <person name="Haas B.J."/>
            <person name="Haas H."/>
            <person name="Harris D.E."/>
            <person name="Horiuchi H."/>
            <person name="Huang J."/>
            <person name="Humphray S."/>
            <person name="Jimenez J."/>
            <person name="Keller N."/>
            <person name="Khouri H."/>
            <person name="Kitamoto K."/>
            <person name="Kobayashi T."/>
            <person name="Konzack S."/>
            <person name="Kulkarni R."/>
            <person name="Kumagai T."/>
            <person name="Lafton A."/>
            <person name="Latge J.-P."/>
            <person name="Li W."/>
            <person name="Lord A."/>
            <person name="Lu C."/>
            <person name="Majoros W.H."/>
            <person name="May G.S."/>
            <person name="Miller B.L."/>
            <person name="Mohamoud Y."/>
            <person name="Molina M."/>
            <person name="Monod M."/>
            <person name="Mouyna I."/>
            <person name="Mulligan S."/>
            <person name="Murphy L.D."/>
            <person name="O'Neil S."/>
            <person name="Paulsen I."/>
            <person name="Penalva M.A."/>
            <person name="Pertea M."/>
            <person name="Price C."/>
            <person name="Pritchard B.L."/>
            <person name="Quail M.A."/>
            <person name="Rabbinowitsch E."/>
            <person name="Rawlins N."/>
            <person name="Rajandream M.A."/>
            <person name="Reichard U."/>
            <person name="Renauld H."/>
            <person name="Robson G.D."/>
            <person name="Rodriguez de Cordoba S."/>
            <person name="Rodriguez-Pena J.M."/>
            <person name="Ronning C.M."/>
            <person name="Rutter S."/>
            <person name="Salzberg S.L."/>
            <person name="Sanchez M."/>
            <person name="Sanchez-Ferrero J.C."/>
            <person name="Saunders D."/>
            <person name="Seeger K."/>
            <person name="Squares R."/>
            <person name="Squares S."/>
            <person name="Takeuchi M."/>
            <person name="Tekaia F."/>
            <person name="Turner G."/>
            <person name="Vazquez de Aldana C.R."/>
            <person name="Weidman J."/>
            <person name="White O."/>
            <person name="Woodward J.R."/>
            <person name="Yu J.-H."/>
            <person name="Fraser C.M."/>
            <person name="Galagan J.E."/>
            <person name="Asai K."/>
            <person name="Machida M."/>
            <person name="Hall N."/>
            <person name="Barrell B.G."/>
            <person name="Denning D.W."/>
        </authorList>
    </citation>
    <scope>NUCLEOTIDE SEQUENCE [LARGE SCALE GENOMIC DNA]</scope>
    <source>
        <strain>ATCC MYA-4609 / CBS 101355 / FGSC A1100 / Af293</strain>
    </source>
</reference>
<evidence type="ECO:0000255" key="1">
    <source>
        <dbReference type="HAMAP-Rule" id="MF_03147"/>
    </source>
</evidence>
<evidence type="ECO:0000305" key="2"/>
<comment type="function">
    <text evidence="1">Allows the formation of correctly charged Gln-tRNA(Gln) through the transamidation of misacylated Glu-tRNA(Gln) in the mitochondria. The reaction takes place in the presence of glutamine and ATP through an activated gamma-phospho-Glu-tRNA(Gln).</text>
</comment>
<comment type="catalytic activity">
    <reaction evidence="1">
        <text>L-glutamyl-tRNA(Gln) + L-glutamine + ATP + H2O = L-glutaminyl-tRNA(Gln) + L-glutamate + ADP + phosphate + H(+)</text>
        <dbReference type="Rhea" id="RHEA:17521"/>
        <dbReference type="Rhea" id="RHEA-COMP:9681"/>
        <dbReference type="Rhea" id="RHEA-COMP:9684"/>
        <dbReference type="ChEBI" id="CHEBI:15377"/>
        <dbReference type="ChEBI" id="CHEBI:15378"/>
        <dbReference type="ChEBI" id="CHEBI:29985"/>
        <dbReference type="ChEBI" id="CHEBI:30616"/>
        <dbReference type="ChEBI" id="CHEBI:43474"/>
        <dbReference type="ChEBI" id="CHEBI:58359"/>
        <dbReference type="ChEBI" id="CHEBI:78520"/>
        <dbReference type="ChEBI" id="CHEBI:78521"/>
        <dbReference type="ChEBI" id="CHEBI:456216"/>
    </reaction>
</comment>
<comment type="subunit">
    <text evidence="1">Subunit of the heterotrimeric GatCAB amidotransferase (AdT) complex, composed of A, B and C subunits.</text>
</comment>
<comment type="subcellular location">
    <subcellularLocation>
        <location evidence="1">Mitochondrion</location>
    </subcellularLocation>
</comment>
<comment type="similarity">
    <text evidence="1">Belongs to the GatB/GatE family. GatB subfamily.</text>
</comment>
<comment type="sequence caution" evidence="2">
    <conflict type="erroneous gene model prediction">
        <sequence resource="EMBL-CDS" id="EAL92437"/>
    </conflict>
</comment>
<dbReference type="EC" id="6.3.5.-" evidence="1"/>
<dbReference type="EMBL" id="AAHF01000002">
    <property type="protein sequence ID" value="EAL92437.1"/>
    <property type="status" value="ALT_SEQ"/>
    <property type="molecule type" value="Genomic_DNA"/>
</dbReference>
<dbReference type="RefSeq" id="XP_754475.1">
    <property type="nucleotide sequence ID" value="XM_749382.1"/>
</dbReference>
<dbReference type="SMR" id="Q4WY16"/>
<dbReference type="FunCoup" id="Q4WY16">
    <property type="interactions" value="365"/>
</dbReference>
<dbReference type="STRING" id="330879.Q4WY16"/>
<dbReference type="GeneID" id="3512603"/>
<dbReference type="KEGG" id="afm:AFUA_3G11440"/>
<dbReference type="eggNOG" id="KOG2438">
    <property type="taxonomic scope" value="Eukaryota"/>
</dbReference>
<dbReference type="HOGENOM" id="CLU_019240_4_1_1"/>
<dbReference type="InParanoid" id="Q4WY16"/>
<dbReference type="OrthoDB" id="1722066at2759"/>
<dbReference type="Proteomes" id="UP000002530">
    <property type="component" value="Chromosome 3"/>
</dbReference>
<dbReference type="GO" id="GO:0030956">
    <property type="term" value="C:glutamyl-tRNA(Gln) amidotransferase complex"/>
    <property type="evidence" value="ECO:0000318"/>
    <property type="project" value="GO_Central"/>
</dbReference>
<dbReference type="GO" id="GO:0005739">
    <property type="term" value="C:mitochondrion"/>
    <property type="evidence" value="ECO:0000318"/>
    <property type="project" value="GO_Central"/>
</dbReference>
<dbReference type="GO" id="GO:0005524">
    <property type="term" value="F:ATP binding"/>
    <property type="evidence" value="ECO:0007669"/>
    <property type="project" value="UniProtKB-KW"/>
</dbReference>
<dbReference type="GO" id="GO:0050567">
    <property type="term" value="F:glutaminyl-tRNA synthase (glutamine-hydrolyzing) activity"/>
    <property type="evidence" value="ECO:0000318"/>
    <property type="project" value="GO_Central"/>
</dbReference>
<dbReference type="GO" id="GO:0070681">
    <property type="term" value="P:glutaminyl-tRNAGln biosynthesis via transamidation"/>
    <property type="evidence" value="ECO:0000318"/>
    <property type="project" value="GO_Central"/>
</dbReference>
<dbReference type="GO" id="GO:0032543">
    <property type="term" value="P:mitochondrial translation"/>
    <property type="evidence" value="ECO:0000318"/>
    <property type="project" value="GO_Central"/>
</dbReference>
<dbReference type="Gene3D" id="1.10.10.410">
    <property type="match status" value="1"/>
</dbReference>
<dbReference type="HAMAP" id="MF_00121">
    <property type="entry name" value="GatB"/>
    <property type="match status" value="1"/>
</dbReference>
<dbReference type="InterPro" id="IPR017959">
    <property type="entry name" value="Asn/Gln-tRNA_amidoTrfase_suB/E"/>
</dbReference>
<dbReference type="InterPro" id="IPR006075">
    <property type="entry name" value="Asn/Gln-tRNA_Trfase_suB/E_cat"/>
</dbReference>
<dbReference type="InterPro" id="IPR018027">
    <property type="entry name" value="Asn/Gln_amidotransferase"/>
</dbReference>
<dbReference type="InterPro" id="IPR003789">
    <property type="entry name" value="Asn/Gln_tRNA_amidoTrase-B-like"/>
</dbReference>
<dbReference type="InterPro" id="IPR004413">
    <property type="entry name" value="GatB"/>
</dbReference>
<dbReference type="InterPro" id="IPR023168">
    <property type="entry name" value="GatB_Yqey_C_2"/>
</dbReference>
<dbReference type="InterPro" id="IPR017958">
    <property type="entry name" value="Gln-tRNA_amidoTrfase_suB_CS"/>
</dbReference>
<dbReference type="InterPro" id="IPR014746">
    <property type="entry name" value="Gln_synth/guanido_kin_cat_dom"/>
</dbReference>
<dbReference type="NCBIfam" id="TIGR00133">
    <property type="entry name" value="gatB"/>
    <property type="match status" value="1"/>
</dbReference>
<dbReference type="NCBIfam" id="NF004012">
    <property type="entry name" value="PRK05477.1-2"/>
    <property type="match status" value="1"/>
</dbReference>
<dbReference type="PANTHER" id="PTHR11659">
    <property type="entry name" value="GLUTAMYL-TRNA GLN AMIDOTRANSFERASE SUBUNIT B MITOCHONDRIAL AND PROKARYOTIC PET112-RELATED"/>
    <property type="match status" value="1"/>
</dbReference>
<dbReference type="PANTHER" id="PTHR11659:SF0">
    <property type="entry name" value="GLUTAMYL-TRNA(GLN) AMIDOTRANSFERASE SUBUNIT B, MITOCHONDRIAL"/>
    <property type="match status" value="1"/>
</dbReference>
<dbReference type="Pfam" id="PF02934">
    <property type="entry name" value="GatB_N"/>
    <property type="match status" value="1"/>
</dbReference>
<dbReference type="Pfam" id="PF02637">
    <property type="entry name" value="GatB_Yqey"/>
    <property type="match status" value="1"/>
</dbReference>
<dbReference type="SMART" id="SM00845">
    <property type="entry name" value="GatB_Yqey"/>
    <property type="match status" value="1"/>
</dbReference>
<dbReference type="SUPFAM" id="SSF89095">
    <property type="entry name" value="GatB/YqeY motif"/>
    <property type="match status" value="1"/>
</dbReference>
<dbReference type="SUPFAM" id="SSF55931">
    <property type="entry name" value="Glutamine synthetase/guanido kinase"/>
    <property type="match status" value="1"/>
</dbReference>
<dbReference type="PROSITE" id="PS01234">
    <property type="entry name" value="GATB"/>
    <property type="match status" value="1"/>
</dbReference>
<name>GATB_ASPFU</name>
<protein>
    <recommendedName>
        <fullName evidence="1">Glutamyl-tRNA(Gln) amidotransferase subunit B, mitochondrial</fullName>
        <shortName evidence="1">Glu-AdT subunit B</shortName>
        <ecNumber evidence="1">6.3.5.-</ecNumber>
    </recommendedName>
</protein>
<gene>
    <name type="ORF">AFUA_3G11440</name>
</gene>